<evidence type="ECO:0000255" key="1">
    <source>
        <dbReference type="HAMAP-Rule" id="MF_01367"/>
    </source>
</evidence>
<evidence type="ECO:0000305" key="2"/>
<reference key="1">
    <citation type="journal article" date="2006" name="J. Bacteriol.">
        <title>The genome sequence of the obligately chemolithoautotrophic, facultatively anaerobic bacterium Thiobacillus denitrificans.</title>
        <authorList>
            <person name="Beller H.R."/>
            <person name="Chain P.S."/>
            <person name="Letain T.E."/>
            <person name="Chakicherla A."/>
            <person name="Larimer F.W."/>
            <person name="Richardson P.M."/>
            <person name="Coleman M.A."/>
            <person name="Wood A.P."/>
            <person name="Kelly D.P."/>
        </authorList>
    </citation>
    <scope>NUCLEOTIDE SEQUENCE [LARGE SCALE GENOMIC DNA]</scope>
    <source>
        <strain>ATCC 25259 / T1</strain>
    </source>
</reference>
<sequence length="122" mass="13246">MIQMQSVLDVADNTGARSVMCIKVLGGSHRRYAGVGDIIKVSIKDAAPRGRVKKGDVYNAVVVRTAKGVRRPDGSLVRFDGNAAVLLNNKLEPIGTRIFGPVTRELRTEKFMKIVSLAPEVL</sequence>
<protein>
    <recommendedName>
        <fullName evidence="1">Large ribosomal subunit protein uL14</fullName>
    </recommendedName>
    <alternativeName>
        <fullName evidence="2">50S ribosomal protein L14</fullName>
    </alternativeName>
</protein>
<gene>
    <name evidence="1" type="primary">rplN</name>
    <name type="ordered locus">Tbd_0415</name>
</gene>
<name>RL14_THIDA</name>
<proteinExistence type="inferred from homology"/>
<comment type="function">
    <text evidence="1">Binds to 23S rRNA. Forms part of two intersubunit bridges in the 70S ribosome.</text>
</comment>
<comment type="subunit">
    <text evidence="1">Part of the 50S ribosomal subunit. Forms a cluster with proteins L3 and L19. In the 70S ribosome, L14 and L19 interact and together make contacts with the 16S rRNA in bridges B5 and B8.</text>
</comment>
<comment type="similarity">
    <text evidence="1">Belongs to the universal ribosomal protein uL14 family.</text>
</comment>
<feature type="chain" id="PRO_0000266575" description="Large ribosomal subunit protein uL14">
    <location>
        <begin position="1"/>
        <end position="122"/>
    </location>
</feature>
<organism>
    <name type="scientific">Thiobacillus denitrificans (strain ATCC 25259 / T1)</name>
    <dbReference type="NCBI Taxonomy" id="292415"/>
    <lineage>
        <taxon>Bacteria</taxon>
        <taxon>Pseudomonadati</taxon>
        <taxon>Pseudomonadota</taxon>
        <taxon>Betaproteobacteria</taxon>
        <taxon>Nitrosomonadales</taxon>
        <taxon>Thiobacillaceae</taxon>
        <taxon>Thiobacillus</taxon>
    </lineage>
</organism>
<keyword id="KW-1185">Reference proteome</keyword>
<keyword id="KW-0687">Ribonucleoprotein</keyword>
<keyword id="KW-0689">Ribosomal protein</keyword>
<keyword id="KW-0694">RNA-binding</keyword>
<keyword id="KW-0699">rRNA-binding</keyword>
<accession>Q3SLN9</accession>
<dbReference type="EMBL" id="CP000116">
    <property type="protein sequence ID" value="AAZ96368.1"/>
    <property type="molecule type" value="Genomic_DNA"/>
</dbReference>
<dbReference type="RefSeq" id="WP_011310927.1">
    <property type="nucleotide sequence ID" value="NC_007404.1"/>
</dbReference>
<dbReference type="SMR" id="Q3SLN9"/>
<dbReference type="STRING" id="292415.Tbd_0415"/>
<dbReference type="KEGG" id="tbd:Tbd_0415"/>
<dbReference type="eggNOG" id="COG0093">
    <property type="taxonomic scope" value="Bacteria"/>
</dbReference>
<dbReference type="HOGENOM" id="CLU_095071_2_1_4"/>
<dbReference type="OrthoDB" id="9806379at2"/>
<dbReference type="Proteomes" id="UP000008291">
    <property type="component" value="Chromosome"/>
</dbReference>
<dbReference type="GO" id="GO:0022625">
    <property type="term" value="C:cytosolic large ribosomal subunit"/>
    <property type="evidence" value="ECO:0007669"/>
    <property type="project" value="TreeGrafter"/>
</dbReference>
<dbReference type="GO" id="GO:0070180">
    <property type="term" value="F:large ribosomal subunit rRNA binding"/>
    <property type="evidence" value="ECO:0007669"/>
    <property type="project" value="TreeGrafter"/>
</dbReference>
<dbReference type="GO" id="GO:0003735">
    <property type="term" value="F:structural constituent of ribosome"/>
    <property type="evidence" value="ECO:0007669"/>
    <property type="project" value="InterPro"/>
</dbReference>
<dbReference type="GO" id="GO:0006412">
    <property type="term" value="P:translation"/>
    <property type="evidence" value="ECO:0007669"/>
    <property type="project" value="UniProtKB-UniRule"/>
</dbReference>
<dbReference type="CDD" id="cd00337">
    <property type="entry name" value="Ribosomal_uL14"/>
    <property type="match status" value="1"/>
</dbReference>
<dbReference type="FunFam" id="2.40.150.20:FF:000001">
    <property type="entry name" value="50S ribosomal protein L14"/>
    <property type="match status" value="1"/>
</dbReference>
<dbReference type="Gene3D" id="2.40.150.20">
    <property type="entry name" value="Ribosomal protein L14"/>
    <property type="match status" value="1"/>
</dbReference>
<dbReference type="HAMAP" id="MF_01367">
    <property type="entry name" value="Ribosomal_uL14"/>
    <property type="match status" value="1"/>
</dbReference>
<dbReference type="InterPro" id="IPR000218">
    <property type="entry name" value="Ribosomal_uL14"/>
</dbReference>
<dbReference type="InterPro" id="IPR005745">
    <property type="entry name" value="Ribosomal_uL14_bac-type"/>
</dbReference>
<dbReference type="InterPro" id="IPR019972">
    <property type="entry name" value="Ribosomal_uL14_CS"/>
</dbReference>
<dbReference type="InterPro" id="IPR036853">
    <property type="entry name" value="Ribosomal_uL14_sf"/>
</dbReference>
<dbReference type="NCBIfam" id="TIGR01067">
    <property type="entry name" value="rplN_bact"/>
    <property type="match status" value="1"/>
</dbReference>
<dbReference type="PANTHER" id="PTHR11761">
    <property type="entry name" value="50S/60S RIBOSOMAL PROTEIN L14/L23"/>
    <property type="match status" value="1"/>
</dbReference>
<dbReference type="PANTHER" id="PTHR11761:SF3">
    <property type="entry name" value="LARGE RIBOSOMAL SUBUNIT PROTEIN UL14M"/>
    <property type="match status" value="1"/>
</dbReference>
<dbReference type="Pfam" id="PF00238">
    <property type="entry name" value="Ribosomal_L14"/>
    <property type="match status" value="1"/>
</dbReference>
<dbReference type="SMART" id="SM01374">
    <property type="entry name" value="Ribosomal_L14"/>
    <property type="match status" value="1"/>
</dbReference>
<dbReference type="SUPFAM" id="SSF50193">
    <property type="entry name" value="Ribosomal protein L14"/>
    <property type="match status" value="1"/>
</dbReference>
<dbReference type="PROSITE" id="PS00049">
    <property type="entry name" value="RIBOSOMAL_L14"/>
    <property type="match status" value="1"/>
</dbReference>